<dbReference type="EMBL" id="CP000501">
    <property type="protein sequence ID" value="ABN68017.2"/>
    <property type="molecule type" value="Genomic_DNA"/>
</dbReference>
<dbReference type="RefSeq" id="XP_001386046.2">
    <property type="nucleotide sequence ID" value="XM_001386009.1"/>
</dbReference>
<dbReference type="SMR" id="A3LYQ7"/>
<dbReference type="FunCoup" id="A3LYQ7">
    <property type="interactions" value="32"/>
</dbReference>
<dbReference type="GeneID" id="4840746"/>
<dbReference type="KEGG" id="pic:PICST_85256"/>
<dbReference type="eggNOG" id="ENOG502RY27">
    <property type="taxonomic scope" value="Eukaryota"/>
</dbReference>
<dbReference type="HOGENOM" id="CLU_054408_0_0_1"/>
<dbReference type="InParanoid" id="A3LYQ7"/>
<dbReference type="OMA" id="KVSWQIS"/>
<dbReference type="OrthoDB" id="3996489at2759"/>
<dbReference type="Proteomes" id="UP000002258">
    <property type="component" value="Chromosome 7"/>
</dbReference>
<dbReference type="GO" id="GO:0005739">
    <property type="term" value="C:mitochondrion"/>
    <property type="evidence" value="ECO:0007669"/>
    <property type="project" value="UniProtKB-SubCell"/>
</dbReference>
<dbReference type="InterPro" id="IPR029427">
    <property type="entry name" value="AIM23"/>
</dbReference>
<dbReference type="Pfam" id="PF14877">
    <property type="entry name" value="mIF3"/>
    <property type="match status" value="1"/>
</dbReference>
<keyword id="KW-0496">Mitochondrion</keyword>
<keyword id="KW-1185">Reference proteome</keyword>
<keyword id="KW-0809">Transit peptide</keyword>
<feature type="transit peptide" description="Mitochondrion" evidence="2">
    <location>
        <begin position="1"/>
        <end position="22"/>
    </location>
</feature>
<feature type="chain" id="PRO_0000399541" description="Altered inheritance of mitochondria protein 23, mitochondrial">
    <location>
        <begin position="23"/>
        <end position="427"/>
    </location>
</feature>
<feature type="region of interest" description="Disordered" evidence="3">
    <location>
        <begin position="71"/>
        <end position="125"/>
    </location>
</feature>
<feature type="region of interest" description="Disordered" evidence="3">
    <location>
        <begin position="372"/>
        <end position="396"/>
    </location>
</feature>
<feature type="compositionally biased region" description="Polar residues" evidence="3">
    <location>
        <begin position="372"/>
        <end position="383"/>
    </location>
</feature>
<protein>
    <recommendedName>
        <fullName>Altered inheritance of mitochondria protein 23, mitochondrial</fullName>
    </recommendedName>
</protein>
<accession>A3LYQ7</accession>
<proteinExistence type="inferred from homology"/>
<sequence length="427" mass="48615">MLRQNRAGLLLVRKLHCSVVVMKPFDISQLARDNSSEKRNQGFNIESLIKNRMDLETDKVVSENATAAPNRFATMFDKEKRQAQKKTGPRRNSESTHHHNAGPYPKKPYGKTNSGSKTRPEIKTRPHKRVVRFEFKTGSDQAQAALKSIIAKVHALSTNYKIKFIDPVSGEVKLSNLVDIANSTDLREAGLQLLPCKEGDLPSIKKVSTREMLKLYSDELAAEKEKALLQSGSVAAQRALNQRLKSERKKSAAKLLNIFWNISLGDLKNQKKTELANRLCKGETFTIYLKRKGREVATPEGEGDEESETLNMYDIRRSLAHDEDALNIETQRRELISQQLFCILDEMPCTYEVEGQKENKLKVTVSPRQDAVKQSISPSSEECTLSAKDLKKQRQLQKQKEREELLKLKKQEKEDNLDSLYSFKIED</sequence>
<gene>
    <name type="primary">AIM23</name>
    <name type="ORF">PICST_85256</name>
</gene>
<reference key="1">
    <citation type="journal article" date="2007" name="Nat. Biotechnol.">
        <title>Genome sequence of the lignocellulose-bioconverting and xylose-fermenting yeast Pichia stipitis.</title>
        <authorList>
            <person name="Jeffries T.W."/>
            <person name="Grigoriev I.V."/>
            <person name="Grimwood J."/>
            <person name="Laplaza J.M."/>
            <person name="Aerts A."/>
            <person name="Salamov A."/>
            <person name="Schmutz J."/>
            <person name="Lindquist E."/>
            <person name="Dehal P."/>
            <person name="Shapiro H."/>
            <person name="Jin Y.-S."/>
            <person name="Passoth V."/>
            <person name="Richardson P.M."/>
        </authorList>
    </citation>
    <scope>NUCLEOTIDE SEQUENCE [LARGE SCALE GENOMIC DNA]</scope>
    <source>
        <strain>ATCC 58785 / CBS 6054 / NBRC 10063 / NRRL Y-11545</strain>
    </source>
</reference>
<organism>
    <name type="scientific">Scheffersomyces stipitis (strain ATCC 58785 / CBS 6054 / NBRC 10063 / NRRL Y-11545)</name>
    <name type="common">Yeast</name>
    <name type="synonym">Pichia stipitis</name>
    <dbReference type="NCBI Taxonomy" id="322104"/>
    <lineage>
        <taxon>Eukaryota</taxon>
        <taxon>Fungi</taxon>
        <taxon>Dikarya</taxon>
        <taxon>Ascomycota</taxon>
        <taxon>Saccharomycotina</taxon>
        <taxon>Pichiomycetes</taxon>
        <taxon>Debaryomycetaceae</taxon>
        <taxon>Scheffersomyces</taxon>
    </lineage>
</organism>
<name>AIM23_PICST</name>
<evidence type="ECO:0000250" key="1"/>
<evidence type="ECO:0000255" key="2"/>
<evidence type="ECO:0000256" key="3">
    <source>
        <dbReference type="SAM" id="MobiDB-lite"/>
    </source>
</evidence>
<evidence type="ECO:0000305" key="4"/>
<comment type="subcellular location">
    <subcellularLocation>
        <location evidence="1">Mitochondrion</location>
    </subcellularLocation>
</comment>
<comment type="similarity">
    <text evidence="4">Belongs to the AIM23 family.</text>
</comment>